<sequence length="399" mass="45771">MDLKITNGFYDPSHLSYEVVERKGLGHPDTLADGIAEQIEIDYSLYCLDKFGVIPHHNFDKIIIRGGHSVQDFGGSDFIEPIKIIFLGRASKKCFNSSIPLFKIQKKAATKYLNRILPNLDVENYVEFETLTSDFTTKTNWFSPEAIEDLPEYLDVPKANDTATMISYWPLTISEELALMIEGYFYKLDKNELPTPRFTKMGGDIKVMVVRNDLEYSIRINFPLISKFFNNDIESQLYVDKHVEKIKKYIEQKYKNISFSIDYHYYLTTTGSCIDFGEEGAVGRGNKTHGIISSFRPNTMEAPAGKNCTYFVGKVWGFLSDTIAKEIYEAFNTPCQIIMQLNIGSKLYRPTHLFIQTEESVDQERVLEIVNRHLNNGKQNTNLILSTQHFIPKTNVYDG</sequence>
<evidence type="ECO:0000305" key="1"/>
<gene>
    <name type="ordered locus">SpyM3_0382</name>
</gene>
<name>Y382_STRP3</name>
<organism>
    <name type="scientific">Streptococcus pyogenes serotype M3 (strain ATCC BAA-595 / MGAS315)</name>
    <dbReference type="NCBI Taxonomy" id="198466"/>
    <lineage>
        <taxon>Bacteria</taxon>
        <taxon>Bacillati</taxon>
        <taxon>Bacillota</taxon>
        <taxon>Bacilli</taxon>
        <taxon>Lactobacillales</taxon>
        <taxon>Streptococcaceae</taxon>
        <taxon>Streptococcus</taxon>
    </lineage>
</organism>
<protein>
    <recommendedName>
        <fullName>Uncharacterized protein SpyM3_0382</fullName>
    </recommendedName>
</protein>
<comment type="similarity">
    <text evidence="1">Belongs to the AdoMet synthetase 2 family.</text>
</comment>
<accession>P0DF56</accession>
<accession>P66769</accession>
<accession>Q9A0Z8</accession>
<feature type="chain" id="PRO_0000150047" description="Uncharacterized protein SpyM3_0382">
    <location>
        <begin position="1"/>
        <end position="399"/>
    </location>
</feature>
<reference key="1">
    <citation type="journal article" date="2002" name="Proc. Natl. Acad. Sci. U.S.A.">
        <title>Genome sequence of a serotype M3 strain of group A Streptococcus: phage-encoded toxins, the high-virulence phenotype, and clone emergence.</title>
        <authorList>
            <person name="Beres S.B."/>
            <person name="Sylva G.L."/>
            <person name="Barbian K.D."/>
            <person name="Lei B."/>
            <person name="Hoff J.S."/>
            <person name="Mammarella N.D."/>
            <person name="Liu M.-Y."/>
            <person name="Smoot J.C."/>
            <person name="Porcella S.F."/>
            <person name="Parkins L.D."/>
            <person name="Campbell D.S."/>
            <person name="Smith T.M."/>
            <person name="McCormick J.K."/>
            <person name="Leung D.Y.M."/>
            <person name="Schlievert P.M."/>
            <person name="Musser J.M."/>
        </authorList>
    </citation>
    <scope>NUCLEOTIDE SEQUENCE [LARGE SCALE GENOMIC DNA]</scope>
    <source>
        <strain>ATCC BAA-595 / MGAS315</strain>
    </source>
</reference>
<proteinExistence type="inferred from homology"/>
<dbReference type="EMBL" id="AE014074">
    <property type="protein sequence ID" value="AAM78989.1"/>
    <property type="molecule type" value="Genomic_DNA"/>
</dbReference>
<dbReference type="RefSeq" id="WP_002985626.1">
    <property type="nucleotide sequence ID" value="NC_004070.1"/>
</dbReference>
<dbReference type="SMR" id="P0DF56"/>
<dbReference type="KEGG" id="spg:SpyM3_0382"/>
<dbReference type="HOGENOM" id="CLU_057642_0_0_9"/>
<dbReference type="Proteomes" id="UP000000564">
    <property type="component" value="Chromosome"/>
</dbReference>
<dbReference type="Gene3D" id="3.30.300.10">
    <property type="match status" value="1"/>
</dbReference>
<dbReference type="Gene3D" id="3.30.300.280">
    <property type="entry name" value="S-adenosylmethionine synthetase, C-terminal domain"/>
    <property type="match status" value="1"/>
</dbReference>
<dbReference type="Gene3D" id="3.30.300.340">
    <property type="entry name" value="S-adenosylmethionine synthetase, N-terminal domain"/>
    <property type="match status" value="1"/>
</dbReference>
<dbReference type="InterPro" id="IPR042543">
    <property type="entry name" value="AdoMet_synthase_2"/>
</dbReference>
<dbReference type="InterPro" id="IPR027790">
    <property type="entry name" value="AdoMet_synthase_2_family"/>
</dbReference>
<dbReference type="InterPro" id="IPR042544">
    <property type="entry name" value="AdoMet_synthase_3"/>
</dbReference>
<dbReference type="NCBIfam" id="NF003362">
    <property type="entry name" value="PRK04439.1-1"/>
    <property type="match status" value="1"/>
</dbReference>
<dbReference type="PANTHER" id="PTHR36697">
    <property type="entry name" value="S-ADENOSYLMETHIONINE SYNTHASE"/>
    <property type="match status" value="1"/>
</dbReference>
<dbReference type="PANTHER" id="PTHR36697:SF1">
    <property type="entry name" value="S-ADENOSYLMETHIONINE SYNTHASE"/>
    <property type="match status" value="1"/>
</dbReference>
<dbReference type="Pfam" id="PF01941">
    <property type="entry name" value="AdoMet_Synthase"/>
    <property type="match status" value="1"/>
</dbReference>